<gene>
    <name type="primary">TUBA3</name>
    <name type="synonym">TUA3</name>
</gene>
<accession>O22349</accession>
<comment type="function">
    <text>Tubulin is the major constituent of microtubules, a cylinder consisting of laterally associated linear protofilaments composed of alpha- and beta-tubulin heterodimers. Microtubules grow by the addition of GTP-tubulin dimers to the microtubule end, where a stabilizing cap forms. Below the cap, tubulin dimers are in GDP-bound state, owing to GTPase activity of alpha-tubulin.</text>
</comment>
<comment type="catalytic activity">
    <reaction evidence="2">
        <text>GTP + H2O = GDP + phosphate + H(+)</text>
        <dbReference type="Rhea" id="RHEA:19669"/>
        <dbReference type="ChEBI" id="CHEBI:15377"/>
        <dbReference type="ChEBI" id="CHEBI:15378"/>
        <dbReference type="ChEBI" id="CHEBI:37565"/>
        <dbReference type="ChEBI" id="CHEBI:43474"/>
        <dbReference type="ChEBI" id="CHEBI:58189"/>
    </reaction>
    <physiologicalReaction direction="left-to-right" evidence="2">
        <dbReference type="Rhea" id="RHEA:19670"/>
    </physiologicalReaction>
</comment>
<comment type="cofactor">
    <cofactor evidence="2">
        <name>Mg(2+)</name>
        <dbReference type="ChEBI" id="CHEBI:18420"/>
    </cofactor>
</comment>
<comment type="subunit">
    <text>Dimer of alpha and beta chains. A typical microtubule is a hollow water-filled tube with an outer diameter of 25 nm and an inner diameter of 15 nM. Alpha-beta heterodimers associate head-to-tail to form protofilaments running lengthwise along the microtubule wall with the beta-tubulin subunit facing the microtubule plus end conferring a structural polarity. Microtubules usually have 13 protofilaments but different protofilament numbers can be found in some organisms and specialized cells.</text>
</comment>
<comment type="subcellular location">
    <subcellularLocation>
        <location>Cytoplasm</location>
        <location>Cytoskeleton</location>
    </subcellularLocation>
</comment>
<comment type="PTM">
    <text evidence="1">Undergoes a tyrosination/detyrosination cycle, the cyclic removal and re-addition of a C-terminal tyrosine residue by the enzymes tubulin tyrosine carboxypeptidase (TTCP) and tubulin tyrosine ligase (TTL), respectively.</text>
</comment>
<comment type="similarity">
    <text evidence="3">Belongs to the tubulin family.</text>
</comment>
<feature type="chain" id="PRO_0000048164" description="Tubulin alpha-3 chain">
    <location>
        <begin position="1"/>
        <end position="450"/>
    </location>
</feature>
<feature type="active site" evidence="2">
    <location>
        <position position="254"/>
    </location>
</feature>
<feature type="binding site" evidence="2">
    <location>
        <position position="11"/>
    </location>
    <ligand>
        <name>GTP</name>
        <dbReference type="ChEBI" id="CHEBI:37565"/>
    </ligand>
</feature>
<feature type="binding site" evidence="2">
    <location>
        <position position="71"/>
    </location>
    <ligand>
        <name>GTP</name>
        <dbReference type="ChEBI" id="CHEBI:37565"/>
    </ligand>
</feature>
<feature type="binding site" evidence="2">
    <location>
        <position position="71"/>
    </location>
    <ligand>
        <name>Mg(2+)</name>
        <dbReference type="ChEBI" id="CHEBI:18420"/>
    </ligand>
</feature>
<feature type="binding site" evidence="2">
    <location>
        <position position="144"/>
    </location>
    <ligand>
        <name>GTP</name>
        <dbReference type="ChEBI" id="CHEBI:37565"/>
    </ligand>
</feature>
<feature type="binding site" evidence="2">
    <location>
        <position position="145"/>
    </location>
    <ligand>
        <name>GTP</name>
        <dbReference type="ChEBI" id="CHEBI:37565"/>
    </ligand>
</feature>
<feature type="binding site" evidence="2">
    <location>
        <position position="179"/>
    </location>
    <ligand>
        <name>GTP</name>
        <dbReference type="ChEBI" id="CHEBI:37565"/>
    </ligand>
</feature>
<feature type="binding site" evidence="2">
    <location>
        <position position="206"/>
    </location>
    <ligand>
        <name>GTP</name>
        <dbReference type="ChEBI" id="CHEBI:37565"/>
    </ligand>
</feature>
<feature type="binding site" evidence="2">
    <location>
        <position position="228"/>
    </location>
    <ligand>
        <name>GTP</name>
        <dbReference type="ChEBI" id="CHEBI:37565"/>
    </ligand>
</feature>
<feature type="site" description="Involved in polymerization">
    <location>
        <position position="450"/>
    </location>
</feature>
<protein>
    <recommendedName>
        <fullName>Tubulin alpha-3 chain</fullName>
        <ecNumber evidence="2">3.6.5.-</ecNumber>
    </recommendedName>
    <alternativeName>
        <fullName>Alpha-3-tubulin</fullName>
    </alternativeName>
</protein>
<proteinExistence type="evidence at transcript level"/>
<dbReference type="EC" id="3.6.5.-" evidence="2"/>
<dbReference type="EMBL" id="AF008122">
    <property type="protein sequence ID" value="AAC05719.1"/>
    <property type="molecule type" value="mRNA"/>
</dbReference>
<dbReference type="SMR" id="O22349"/>
<dbReference type="GO" id="GO:0005737">
    <property type="term" value="C:cytoplasm"/>
    <property type="evidence" value="ECO:0007669"/>
    <property type="project" value="UniProtKB-KW"/>
</dbReference>
<dbReference type="GO" id="GO:0005874">
    <property type="term" value="C:microtubule"/>
    <property type="evidence" value="ECO:0007669"/>
    <property type="project" value="UniProtKB-KW"/>
</dbReference>
<dbReference type="GO" id="GO:0005525">
    <property type="term" value="F:GTP binding"/>
    <property type="evidence" value="ECO:0007669"/>
    <property type="project" value="UniProtKB-KW"/>
</dbReference>
<dbReference type="GO" id="GO:0016787">
    <property type="term" value="F:hydrolase activity"/>
    <property type="evidence" value="ECO:0007669"/>
    <property type="project" value="UniProtKB-KW"/>
</dbReference>
<dbReference type="GO" id="GO:0046872">
    <property type="term" value="F:metal ion binding"/>
    <property type="evidence" value="ECO:0007669"/>
    <property type="project" value="UniProtKB-KW"/>
</dbReference>
<dbReference type="GO" id="GO:0005200">
    <property type="term" value="F:structural constituent of cytoskeleton"/>
    <property type="evidence" value="ECO:0007669"/>
    <property type="project" value="InterPro"/>
</dbReference>
<dbReference type="GO" id="GO:0007017">
    <property type="term" value="P:microtubule-based process"/>
    <property type="evidence" value="ECO:0007669"/>
    <property type="project" value="InterPro"/>
</dbReference>
<dbReference type="CDD" id="cd02186">
    <property type="entry name" value="alpha_tubulin"/>
    <property type="match status" value="1"/>
</dbReference>
<dbReference type="FunFam" id="1.10.287.600:FF:000005">
    <property type="entry name" value="Tubulin alpha chain"/>
    <property type="match status" value="1"/>
</dbReference>
<dbReference type="FunFam" id="3.30.1330.20:FF:000001">
    <property type="entry name" value="Tubulin alpha chain"/>
    <property type="match status" value="1"/>
</dbReference>
<dbReference type="FunFam" id="3.40.50.1440:FF:000004">
    <property type="entry name" value="Tubulin alpha chain"/>
    <property type="match status" value="1"/>
</dbReference>
<dbReference type="Gene3D" id="1.10.287.600">
    <property type="entry name" value="Helix hairpin bin"/>
    <property type="match status" value="1"/>
</dbReference>
<dbReference type="Gene3D" id="3.30.1330.20">
    <property type="entry name" value="Tubulin/FtsZ, C-terminal domain"/>
    <property type="match status" value="1"/>
</dbReference>
<dbReference type="Gene3D" id="3.40.50.1440">
    <property type="entry name" value="Tubulin/FtsZ, GTPase domain"/>
    <property type="match status" value="1"/>
</dbReference>
<dbReference type="InterPro" id="IPR002452">
    <property type="entry name" value="Alpha_tubulin"/>
</dbReference>
<dbReference type="InterPro" id="IPR013838">
    <property type="entry name" value="Beta-tubulin_BS"/>
</dbReference>
<dbReference type="InterPro" id="IPR008280">
    <property type="entry name" value="Tub_FtsZ_C"/>
</dbReference>
<dbReference type="InterPro" id="IPR000217">
    <property type="entry name" value="Tubulin"/>
</dbReference>
<dbReference type="InterPro" id="IPR037103">
    <property type="entry name" value="Tubulin/FtsZ-like_C"/>
</dbReference>
<dbReference type="InterPro" id="IPR018316">
    <property type="entry name" value="Tubulin/FtsZ_2-layer-sand-dom"/>
</dbReference>
<dbReference type="InterPro" id="IPR036525">
    <property type="entry name" value="Tubulin/FtsZ_GTPase_sf"/>
</dbReference>
<dbReference type="InterPro" id="IPR023123">
    <property type="entry name" value="Tubulin_C"/>
</dbReference>
<dbReference type="InterPro" id="IPR017975">
    <property type="entry name" value="Tubulin_CS"/>
</dbReference>
<dbReference type="InterPro" id="IPR003008">
    <property type="entry name" value="Tubulin_FtsZ_GTPase"/>
</dbReference>
<dbReference type="PANTHER" id="PTHR11588">
    <property type="entry name" value="TUBULIN"/>
    <property type="match status" value="1"/>
</dbReference>
<dbReference type="Pfam" id="PF00091">
    <property type="entry name" value="Tubulin"/>
    <property type="match status" value="1"/>
</dbReference>
<dbReference type="Pfam" id="PF03953">
    <property type="entry name" value="Tubulin_C"/>
    <property type="match status" value="1"/>
</dbReference>
<dbReference type="PRINTS" id="PR01162">
    <property type="entry name" value="ALPHATUBULIN"/>
</dbReference>
<dbReference type="PRINTS" id="PR01161">
    <property type="entry name" value="TUBULIN"/>
</dbReference>
<dbReference type="SMART" id="SM00864">
    <property type="entry name" value="Tubulin"/>
    <property type="match status" value="1"/>
</dbReference>
<dbReference type="SMART" id="SM00865">
    <property type="entry name" value="Tubulin_C"/>
    <property type="match status" value="1"/>
</dbReference>
<dbReference type="SUPFAM" id="SSF55307">
    <property type="entry name" value="Tubulin C-terminal domain-like"/>
    <property type="match status" value="1"/>
</dbReference>
<dbReference type="SUPFAM" id="SSF52490">
    <property type="entry name" value="Tubulin nucleotide-binding domain-like"/>
    <property type="match status" value="1"/>
</dbReference>
<dbReference type="PROSITE" id="PS00227">
    <property type="entry name" value="TUBULIN"/>
    <property type="match status" value="1"/>
</dbReference>
<organism>
    <name type="scientific">Eleusine indica</name>
    <name type="common">Goosegrass</name>
    <name type="synonym">Cynosurus indicus</name>
    <dbReference type="NCBI Taxonomy" id="29674"/>
    <lineage>
        <taxon>Eukaryota</taxon>
        <taxon>Viridiplantae</taxon>
        <taxon>Streptophyta</taxon>
        <taxon>Embryophyta</taxon>
        <taxon>Tracheophyta</taxon>
        <taxon>Spermatophyta</taxon>
        <taxon>Magnoliopsida</taxon>
        <taxon>Liliopsida</taxon>
        <taxon>Poales</taxon>
        <taxon>Poaceae</taxon>
        <taxon>PACMAD clade</taxon>
        <taxon>Chloridoideae</taxon>
        <taxon>Cynodonteae</taxon>
        <taxon>Eleusininae</taxon>
        <taxon>Eleusine</taxon>
    </lineage>
</organism>
<reference key="1">
    <citation type="journal article" date="1998" name="Plant Cell">
        <title>Alpha-tubulin missense mutations correlate with antimicrotubule drug resistance in Eleusine indica.</title>
        <authorList>
            <person name="Yamamoto E."/>
            <person name="Zeng L."/>
            <person name="Baird W.V."/>
        </authorList>
    </citation>
    <scope>NUCLEOTIDE SEQUENCE [MRNA]</scope>
    <source>
        <tissue>Leaf</tissue>
    </source>
</reference>
<sequence length="450" mass="49613">MREIISIHIGQAGIQVGNACWELYCLEHGIEPDGTMPSDTSVGVAHDAFNTFFSETGSGKHVPRAIFVDLEPTVIDEVRTGSYRQLFHPEQLISGKEDAANNFARGHYTVGKEIVDLCLDRVRKLADNCTGLQGFLVFNAVGGGTGSGLGSLLLERLSVDYGKKSKLGFTIYPSPQVSTAVVEPYNSVLSTHSLLEHTDVAVLLDNEAIYDICRRSLDIERPTYTNLNRLISQIISSLTTSLRFDGAINVDVTEFQTNLVPYPRIHFMLSSYAPVISAEKAYHEQLSVPEITNAVFEPSSMMAKCDPRHGKYMACCLMYRGDVVPKDVNAAVATIKTKRTVQFVDWCPTGFKCGINYQPPSVVPGGDLAKVQRAVCMISNNTAVAEVFSRIDHKFDLMYAKRAFVHWYVGEGMEEGEFSEAREDLAALEKDYEEVGAEGADDEGDEGEDY</sequence>
<name>TBA3_ELEIN</name>
<keyword id="KW-0963">Cytoplasm</keyword>
<keyword id="KW-0206">Cytoskeleton</keyword>
<keyword id="KW-0342">GTP-binding</keyword>
<keyword id="KW-0378">Hydrolase</keyword>
<keyword id="KW-0460">Magnesium</keyword>
<keyword id="KW-0479">Metal-binding</keyword>
<keyword id="KW-0493">Microtubule</keyword>
<keyword id="KW-0547">Nucleotide-binding</keyword>
<evidence type="ECO:0000250" key="1"/>
<evidence type="ECO:0000250" key="2">
    <source>
        <dbReference type="UniProtKB" id="P68363"/>
    </source>
</evidence>
<evidence type="ECO:0000305" key="3"/>